<protein>
    <recommendedName>
        <fullName>Uncharacterized protein YFL012W</fullName>
    </recommendedName>
</protein>
<name>YFB2_YEAST</name>
<accession>P43580</accession>
<accession>D6VTL7</accession>
<sequence length="148" mass="17180">MPKSRPKRTIASSSSVFYGSSPFQNDGYIKVMELVSHIVIEINHSPTATTDETRKQNNPELKVKEPVCNLKKWENNTNFILEDHTKNKTKLSSTDRIRKWFRRHILKEEIEILSHGKQLSSIDEDYCPSNVLVGCSRDLNKLRSFQNF</sequence>
<dbReference type="EMBL" id="D50617">
    <property type="protein sequence ID" value="BAA09226.1"/>
    <property type="molecule type" value="Genomic_DNA"/>
</dbReference>
<dbReference type="EMBL" id="Z46255">
    <property type="protein sequence ID" value="CAA86345.1"/>
    <property type="molecule type" value="Genomic_DNA"/>
</dbReference>
<dbReference type="EMBL" id="AY558563">
    <property type="protein sequence ID" value="AAS56889.1"/>
    <property type="molecule type" value="Genomic_DNA"/>
</dbReference>
<dbReference type="EMBL" id="BK006940">
    <property type="protein sequence ID" value="DAA12427.1"/>
    <property type="molecule type" value="Genomic_DNA"/>
</dbReference>
<dbReference type="PIR" id="S48314">
    <property type="entry name" value="S48314"/>
</dbReference>
<dbReference type="RefSeq" id="NP_116643.1">
    <property type="nucleotide sequence ID" value="NM_001179954.1"/>
</dbReference>
<dbReference type="SMR" id="P43580"/>
<dbReference type="BioGRID" id="31134">
    <property type="interactions" value="46"/>
</dbReference>
<dbReference type="DIP" id="DIP-4007N"/>
<dbReference type="FunCoup" id="P43580">
    <property type="interactions" value="35"/>
</dbReference>
<dbReference type="STRING" id="4932.YFL012W"/>
<dbReference type="iPTMnet" id="P43580"/>
<dbReference type="PaxDb" id="4932-YFL012W"/>
<dbReference type="EnsemblFungi" id="YFL012W_mRNA">
    <property type="protein sequence ID" value="YFL012W"/>
    <property type="gene ID" value="YFL012W"/>
</dbReference>
<dbReference type="GeneID" id="850535"/>
<dbReference type="KEGG" id="sce:YFL012W"/>
<dbReference type="AGR" id="SGD:S000001882"/>
<dbReference type="SGD" id="S000001882">
    <property type="gene designation" value="YFL012W"/>
</dbReference>
<dbReference type="VEuPathDB" id="FungiDB:YFL012W"/>
<dbReference type="HOGENOM" id="CLU_147572_0_0_1"/>
<dbReference type="InParanoid" id="P43580"/>
<dbReference type="OrthoDB" id="4041977at2759"/>
<dbReference type="BioCyc" id="YEAST:G3O-30444-MONOMER"/>
<dbReference type="BioGRID-ORCS" id="850535">
    <property type="hits" value="5 hits in 10 CRISPR screens"/>
</dbReference>
<dbReference type="PRO" id="PR:P43580"/>
<dbReference type="Proteomes" id="UP000002311">
    <property type="component" value="Chromosome VI"/>
</dbReference>
<dbReference type="RNAct" id="P43580">
    <property type="molecule type" value="protein"/>
</dbReference>
<gene>
    <name type="ordered locus">YFL012W</name>
</gene>
<keyword id="KW-1185">Reference proteome</keyword>
<proteinExistence type="predicted"/>
<feature type="chain" id="PRO_0000202679" description="Uncharacterized protein YFL012W">
    <location>
        <begin position="1"/>
        <end position="148"/>
    </location>
</feature>
<organism>
    <name type="scientific">Saccharomyces cerevisiae (strain ATCC 204508 / S288c)</name>
    <name type="common">Baker's yeast</name>
    <dbReference type="NCBI Taxonomy" id="559292"/>
    <lineage>
        <taxon>Eukaryota</taxon>
        <taxon>Fungi</taxon>
        <taxon>Dikarya</taxon>
        <taxon>Ascomycota</taxon>
        <taxon>Saccharomycotina</taxon>
        <taxon>Saccharomycetes</taxon>
        <taxon>Saccharomycetales</taxon>
        <taxon>Saccharomycetaceae</taxon>
        <taxon>Saccharomyces</taxon>
    </lineage>
</organism>
<reference key="1">
    <citation type="journal article" date="1995" name="Nat. Genet.">
        <title>Analysis of the nucleotide sequence of chromosome VI from Saccharomyces cerevisiae.</title>
        <authorList>
            <person name="Murakami Y."/>
            <person name="Naitou M."/>
            <person name="Hagiwara H."/>
            <person name="Shibata T."/>
            <person name="Ozawa M."/>
            <person name="Sasanuma S."/>
            <person name="Sasanuma M."/>
            <person name="Tsuchiya Y."/>
            <person name="Soeda E."/>
            <person name="Yokoyama K."/>
            <person name="Yamazaki M."/>
            <person name="Tashiro H."/>
            <person name="Eki T."/>
        </authorList>
    </citation>
    <scope>NUCLEOTIDE SEQUENCE [LARGE SCALE GENOMIC DNA]</scope>
    <source>
        <strain>ATCC 204508 / S288c</strain>
    </source>
</reference>
<reference key="2">
    <citation type="journal article" date="2014" name="G3 (Bethesda)">
        <title>The reference genome sequence of Saccharomyces cerevisiae: Then and now.</title>
        <authorList>
            <person name="Engel S.R."/>
            <person name="Dietrich F.S."/>
            <person name="Fisk D.G."/>
            <person name="Binkley G."/>
            <person name="Balakrishnan R."/>
            <person name="Costanzo M.C."/>
            <person name="Dwight S.S."/>
            <person name="Hitz B.C."/>
            <person name="Karra K."/>
            <person name="Nash R.S."/>
            <person name="Weng S."/>
            <person name="Wong E.D."/>
            <person name="Lloyd P."/>
            <person name="Skrzypek M.S."/>
            <person name="Miyasato S.R."/>
            <person name="Simison M."/>
            <person name="Cherry J.M."/>
        </authorList>
    </citation>
    <scope>GENOME REANNOTATION</scope>
    <source>
        <strain>ATCC 204508 / S288c</strain>
    </source>
</reference>
<reference key="3">
    <citation type="submission" date="1994-09" db="EMBL/GenBank/DDBJ databases">
        <authorList>
            <person name="Barrell B.G."/>
            <person name="Churcher C."/>
            <person name="Rajandream M.A."/>
        </authorList>
    </citation>
    <scope>NUCLEOTIDE SEQUENCE [GENOMIC DNA]</scope>
    <source>
        <strain>ATCC 204511 / S288c / AB972</strain>
    </source>
</reference>
<reference key="4">
    <citation type="journal article" date="2007" name="Genome Res.">
        <title>Approaching a complete repository of sequence-verified protein-encoding clones for Saccharomyces cerevisiae.</title>
        <authorList>
            <person name="Hu Y."/>
            <person name="Rolfs A."/>
            <person name="Bhullar B."/>
            <person name="Murthy T.V.S."/>
            <person name="Zhu C."/>
            <person name="Berger M.F."/>
            <person name="Camargo A.A."/>
            <person name="Kelley F."/>
            <person name="McCarron S."/>
            <person name="Jepson D."/>
            <person name="Richardson A."/>
            <person name="Raphael J."/>
            <person name="Moreira D."/>
            <person name="Taycher E."/>
            <person name="Zuo D."/>
            <person name="Mohr S."/>
            <person name="Kane M.F."/>
            <person name="Williamson J."/>
            <person name="Simpson A.J.G."/>
            <person name="Bulyk M.L."/>
            <person name="Harlow E."/>
            <person name="Marsischky G."/>
            <person name="Kolodner R.D."/>
            <person name="LaBaer J."/>
        </authorList>
    </citation>
    <scope>NUCLEOTIDE SEQUENCE [GENOMIC DNA]</scope>
    <source>
        <strain>ATCC 204508 / S288c</strain>
    </source>
</reference>